<protein>
    <recommendedName>
        <fullName evidence="1">Histidinol-phosphate aminotransferase</fullName>
        <ecNumber evidence="1">2.6.1.9</ecNumber>
    </recommendedName>
    <alternativeName>
        <fullName evidence="1">Imidazole acetol-phosphate transaminase</fullName>
    </alternativeName>
</protein>
<name>HIS8_ACIBC</name>
<organism>
    <name type="scientific">Acinetobacter baumannii (strain ACICU)</name>
    <dbReference type="NCBI Taxonomy" id="405416"/>
    <lineage>
        <taxon>Bacteria</taxon>
        <taxon>Pseudomonadati</taxon>
        <taxon>Pseudomonadota</taxon>
        <taxon>Gammaproteobacteria</taxon>
        <taxon>Moraxellales</taxon>
        <taxon>Moraxellaceae</taxon>
        <taxon>Acinetobacter</taxon>
        <taxon>Acinetobacter calcoaceticus/baumannii complex</taxon>
    </lineage>
</organism>
<comment type="catalytic activity">
    <reaction evidence="1">
        <text>L-histidinol phosphate + 2-oxoglutarate = 3-(imidazol-4-yl)-2-oxopropyl phosphate + L-glutamate</text>
        <dbReference type="Rhea" id="RHEA:23744"/>
        <dbReference type="ChEBI" id="CHEBI:16810"/>
        <dbReference type="ChEBI" id="CHEBI:29985"/>
        <dbReference type="ChEBI" id="CHEBI:57766"/>
        <dbReference type="ChEBI" id="CHEBI:57980"/>
        <dbReference type="EC" id="2.6.1.9"/>
    </reaction>
</comment>
<comment type="cofactor">
    <cofactor evidence="1">
        <name>pyridoxal 5'-phosphate</name>
        <dbReference type="ChEBI" id="CHEBI:597326"/>
    </cofactor>
</comment>
<comment type="pathway">
    <text evidence="1">Amino-acid biosynthesis; L-histidine biosynthesis; L-histidine from 5-phospho-alpha-D-ribose 1-diphosphate: step 7/9.</text>
</comment>
<comment type="subunit">
    <text evidence="1">Homodimer.</text>
</comment>
<comment type="similarity">
    <text evidence="1">Belongs to the class-II pyridoxal-phosphate-dependent aminotransferase family. Histidinol-phosphate aminotransferase subfamily.</text>
</comment>
<proteinExistence type="inferred from homology"/>
<gene>
    <name evidence="1" type="primary">hisC</name>
    <name type="ordered locus">ACICU_00633</name>
</gene>
<accession>B2HTW5</accession>
<sequence length="361" mass="40497">MTVSTAQMRFWSPEVRELEPYVPGEQPKIQNLLKLNTNENPYPPSPKVVEAVQEVLHEQADVLRLYPDPDATVLKQAIAKQQNIDVSQVFVGNGSDEVLAHIFKAFFLQDGPILYPDITYSFYPVYSQFFGTKTKEIPLNENFEIDVRDYTQPNGGVIITNPNAPTSIALSLAEIEQVLQANPDRVVVIDEAYVDFGAESAVSLINRYENLVVCQTTSKSRSLAGLRVGFAIAQSHLIAALEAVKNSFNSYPIDRFAIAAAVASFEDQAYFEEQCQKVITSREKLVRDLTELGFNVLPSKANFIFATHSQHDAGQLAQKLREQGIIVRYFNKPRINQFLRITVGTNEQNARLVQTLKQDIL</sequence>
<feature type="chain" id="PRO_1000135378" description="Histidinol-phosphate aminotransferase">
    <location>
        <begin position="1"/>
        <end position="361"/>
    </location>
</feature>
<feature type="modified residue" description="N6-(pyridoxal phosphate)lysine" evidence="1">
    <location>
        <position position="219"/>
    </location>
</feature>
<keyword id="KW-0028">Amino-acid biosynthesis</keyword>
<keyword id="KW-0032">Aminotransferase</keyword>
<keyword id="KW-0368">Histidine biosynthesis</keyword>
<keyword id="KW-0663">Pyridoxal phosphate</keyword>
<keyword id="KW-0808">Transferase</keyword>
<reference key="1">
    <citation type="journal article" date="2008" name="Antimicrob. Agents Chemother.">
        <title>Whole-genome pyrosequencing of an epidemic multidrug-resistant Acinetobacter baumannii strain belonging to the European clone II group.</title>
        <authorList>
            <person name="Iacono M."/>
            <person name="Villa L."/>
            <person name="Fortini D."/>
            <person name="Bordoni R."/>
            <person name="Imperi F."/>
            <person name="Bonnal R.J."/>
            <person name="Sicheritz-Ponten T."/>
            <person name="De Bellis G."/>
            <person name="Visca P."/>
            <person name="Cassone A."/>
            <person name="Carattoli A."/>
        </authorList>
    </citation>
    <scope>NUCLEOTIDE SEQUENCE [LARGE SCALE GENOMIC DNA]</scope>
    <source>
        <strain>ACICU</strain>
    </source>
</reference>
<evidence type="ECO:0000255" key="1">
    <source>
        <dbReference type="HAMAP-Rule" id="MF_01023"/>
    </source>
</evidence>
<dbReference type="EC" id="2.6.1.9" evidence="1"/>
<dbReference type="EMBL" id="CP000863">
    <property type="protein sequence ID" value="ACC55945.1"/>
    <property type="molecule type" value="Genomic_DNA"/>
</dbReference>
<dbReference type="RefSeq" id="WP_000218892.1">
    <property type="nucleotide sequence ID" value="NZ_CP031380.1"/>
</dbReference>
<dbReference type="SMR" id="B2HTW5"/>
<dbReference type="KEGG" id="abc:ACICU_00633"/>
<dbReference type="HOGENOM" id="CLU_017584_3_0_6"/>
<dbReference type="UniPathway" id="UPA00031">
    <property type="reaction ID" value="UER00012"/>
</dbReference>
<dbReference type="Proteomes" id="UP000008839">
    <property type="component" value="Chromosome"/>
</dbReference>
<dbReference type="GO" id="GO:0004400">
    <property type="term" value="F:histidinol-phosphate transaminase activity"/>
    <property type="evidence" value="ECO:0007669"/>
    <property type="project" value="UniProtKB-UniRule"/>
</dbReference>
<dbReference type="GO" id="GO:0030170">
    <property type="term" value="F:pyridoxal phosphate binding"/>
    <property type="evidence" value="ECO:0007669"/>
    <property type="project" value="InterPro"/>
</dbReference>
<dbReference type="GO" id="GO:0000105">
    <property type="term" value="P:L-histidine biosynthetic process"/>
    <property type="evidence" value="ECO:0007669"/>
    <property type="project" value="UniProtKB-UniRule"/>
</dbReference>
<dbReference type="CDD" id="cd00609">
    <property type="entry name" value="AAT_like"/>
    <property type="match status" value="1"/>
</dbReference>
<dbReference type="Gene3D" id="3.90.1150.10">
    <property type="entry name" value="Aspartate Aminotransferase, domain 1"/>
    <property type="match status" value="1"/>
</dbReference>
<dbReference type="Gene3D" id="3.40.640.10">
    <property type="entry name" value="Type I PLP-dependent aspartate aminotransferase-like (Major domain)"/>
    <property type="match status" value="1"/>
</dbReference>
<dbReference type="HAMAP" id="MF_01023">
    <property type="entry name" value="HisC_aminotrans_2"/>
    <property type="match status" value="1"/>
</dbReference>
<dbReference type="InterPro" id="IPR004839">
    <property type="entry name" value="Aminotransferase_I/II_large"/>
</dbReference>
<dbReference type="InterPro" id="IPR005861">
    <property type="entry name" value="HisP_aminotrans"/>
</dbReference>
<dbReference type="InterPro" id="IPR050106">
    <property type="entry name" value="HistidinolP_aminotransfase"/>
</dbReference>
<dbReference type="InterPro" id="IPR015424">
    <property type="entry name" value="PyrdxlP-dep_Trfase"/>
</dbReference>
<dbReference type="InterPro" id="IPR015421">
    <property type="entry name" value="PyrdxlP-dep_Trfase_major"/>
</dbReference>
<dbReference type="InterPro" id="IPR015422">
    <property type="entry name" value="PyrdxlP-dep_Trfase_small"/>
</dbReference>
<dbReference type="NCBIfam" id="TIGR01141">
    <property type="entry name" value="hisC"/>
    <property type="match status" value="1"/>
</dbReference>
<dbReference type="PANTHER" id="PTHR43643:SF3">
    <property type="entry name" value="HISTIDINOL-PHOSPHATE AMINOTRANSFERASE"/>
    <property type="match status" value="1"/>
</dbReference>
<dbReference type="PANTHER" id="PTHR43643">
    <property type="entry name" value="HISTIDINOL-PHOSPHATE AMINOTRANSFERASE 2"/>
    <property type="match status" value="1"/>
</dbReference>
<dbReference type="Pfam" id="PF00155">
    <property type="entry name" value="Aminotran_1_2"/>
    <property type="match status" value="1"/>
</dbReference>
<dbReference type="SUPFAM" id="SSF53383">
    <property type="entry name" value="PLP-dependent transferases"/>
    <property type="match status" value="1"/>
</dbReference>